<comment type="function">
    <text evidence="1">Involved in the synthesis of meso-diaminopimelate (m-DAP or DL-DAP), required for both lysine and peptidoglycan biosynthesis. Catalyzes the direct conversion of tetrahydrodipicolinate to LL-diaminopimelate.</text>
</comment>
<comment type="catalytic activity">
    <reaction evidence="1">
        <text>(2S,6S)-2,6-diaminopimelate + 2-oxoglutarate = (S)-2,3,4,5-tetrahydrodipicolinate + L-glutamate + H2O + H(+)</text>
        <dbReference type="Rhea" id="RHEA:23988"/>
        <dbReference type="ChEBI" id="CHEBI:15377"/>
        <dbReference type="ChEBI" id="CHEBI:15378"/>
        <dbReference type="ChEBI" id="CHEBI:16810"/>
        <dbReference type="ChEBI" id="CHEBI:16845"/>
        <dbReference type="ChEBI" id="CHEBI:29985"/>
        <dbReference type="ChEBI" id="CHEBI:57609"/>
        <dbReference type="EC" id="2.6.1.83"/>
    </reaction>
</comment>
<comment type="cofactor">
    <cofactor evidence="1">
        <name>pyridoxal 5'-phosphate</name>
        <dbReference type="ChEBI" id="CHEBI:597326"/>
    </cofactor>
</comment>
<comment type="pathway">
    <text evidence="1">Amino-acid biosynthesis; L-lysine biosynthesis via DAP pathway; LL-2,6-diaminopimelate from (S)-tetrahydrodipicolinate (aminotransferase route): step 1/1.</text>
</comment>
<comment type="subunit">
    <text evidence="1">Homodimer.</text>
</comment>
<comment type="similarity">
    <text evidence="1">Belongs to the class-I pyridoxal-phosphate-dependent aminotransferase family. LL-diaminopimelate aminotransferase subfamily.</text>
</comment>
<dbReference type="EC" id="2.6.1.83" evidence="1"/>
<dbReference type="EMBL" id="AJ965256">
    <property type="protein sequence ID" value="CAI82875.1"/>
    <property type="molecule type" value="Genomic_DNA"/>
</dbReference>
<dbReference type="RefSeq" id="WP_011309226.1">
    <property type="nucleotide sequence ID" value="NC_007356.1"/>
</dbReference>
<dbReference type="SMR" id="Q3ZXC8"/>
<dbReference type="KEGG" id="deh:cbdbA714"/>
<dbReference type="HOGENOM" id="CLU_017584_4_5_0"/>
<dbReference type="UniPathway" id="UPA00034">
    <property type="reaction ID" value="UER00466"/>
</dbReference>
<dbReference type="Proteomes" id="UP000000433">
    <property type="component" value="Chromosome"/>
</dbReference>
<dbReference type="GO" id="GO:0010285">
    <property type="term" value="F:L,L-diaminopimelate aminotransferase activity"/>
    <property type="evidence" value="ECO:0007669"/>
    <property type="project" value="UniProtKB-UniRule"/>
</dbReference>
<dbReference type="GO" id="GO:0030170">
    <property type="term" value="F:pyridoxal phosphate binding"/>
    <property type="evidence" value="ECO:0007669"/>
    <property type="project" value="UniProtKB-UniRule"/>
</dbReference>
<dbReference type="GO" id="GO:0033362">
    <property type="term" value="P:lysine biosynthetic process via diaminopimelate, diaminopimelate-aminotransferase pathway"/>
    <property type="evidence" value="ECO:0007669"/>
    <property type="project" value="UniProtKB-UniRule"/>
</dbReference>
<dbReference type="CDD" id="cd00609">
    <property type="entry name" value="AAT_like"/>
    <property type="match status" value="1"/>
</dbReference>
<dbReference type="Gene3D" id="3.90.1150.10">
    <property type="entry name" value="Aspartate Aminotransferase, domain 1"/>
    <property type="match status" value="1"/>
</dbReference>
<dbReference type="Gene3D" id="3.40.640.10">
    <property type="entry name" value="Type I PLP-dependent aspartate aminotransferase-like (Major domain)"/>
    <property type="match status" value="1"/>
</dbReference>
<dbReference type="HAMAP" id="MF_01642">
    <property type="entry name" value="DapL_aminotrans_1"/>
    <property type="match status" value="1"/>
</dbReference>
<dbReference type="InterPro" id="IPR004839">
    <property type="entry name" value="Aminotransferase_I/II_large"/>
</dbReference>
<dbReference type="InterPro" id="IPR019881">
    <property type="entry name" value="DAP-NH2Trfase_DapL_Desulfo"/>
</dbReference>
<dbReference type="InterPro" id="IPR019942">
    <property type="entry name" value="DapL/ALD1"/>
</dbReference>
<dbReference type="InterPro" id="IPR050881">
    <property type="entry name" value="LL-DAP_aminotransferase"/>
</dbReference>
<dbReference type="InterPro" id="IPR004838">
    <property type="entry name" value="NHTrfase_class1_PyrdxlP-BS"/>
</dbReference>
<dbReference type="InterPro" id="IPR015424">
    <property type="entry name" value="PyrdxlP-dep_Trfase"/>
</dbReference>
<dbReference type="InterPro" id="IPR015421">
    <property type="entry name" value="PyrdxlP-dep_Trfase_major"/>
</dbReference>
<dbReference type="InterPro" id="IPR015422">
    <property type="entry name" value="PyrdxlP-dep_Trfase_small"/>
</dbReference>
<dbReference type="NCBIfam" id="TIGR03540">
    <property type="entry name" value="DapC_direct"/>
    <property type="match status" value="1"/>
</dbReference>
<dbReference type="NCBIfam" id="NF006756">
    <property type="entry name" value="PRK09276.1"/>
    <property type="match status" value="1"/>
</dbReference>
<dbReference type="PANTHER" id="PTHR42832">
    <property type="entry name" value="AMINO ACID AMINOTRANSFERASE"/>
    <property type="match status" value="1"/>
</dbReference>
<dbReference type="PANTHER" id="PTHR42832:SF3">
    <property type="entry name" value="L-GLUTAMINE--4-(METHYLSULFANYL)-2-OXOBUTANOATE AMINOTRANSFERASE"/>
    <property type="match status" value="1"/>
</dbReference>
<dbReference type="Pfam" id="PF00155">
    <property type="entry name" value="Aminotran_1_2"/>
    <property type="match status" value="1"/>
</dbReference>
<dbReference type="SUPFAM" id="SSF53383">
    <property type="entry name" value="PLP-dependent transferases"/>
    <property type="match status" value="1"/>
</dbReference>
<dbReference type="PROSITE" id="PS00105">
    <property type="entry name" value="AA_TRANSFER_CLASS_1"/>
    <property type="match status" value="1"/>
</dbReference>
<accession>Q3ZXC8</accession>
<gene>
    <name evidence="1" type="primary">dapL</name>
    <name type="ordered locus">cbdbA714</name>
</gene>
<name>DAPAT_DEHMC</name>
<evidence type="ECO:0000255" key="1">
    <source>
        <dbReference type="HAMAP-Rule" id="MF_01642"/>
    </source>
</evidence>
<sequence length="388" mass="42366">MKLSKRIENLPPYLFVQISKKIAEKRAKGEEVISFAIGDPDLPTPKHILAELCKAAEDPSNHRYPETEGLPVLRKAMAEWYQKRFGVKLNPDTEVLPLIGSKEGIGHAAWCFLDPGDIALVPNPAYPVYAISSQLAGAEVFNLPLNKGNNFLPNLEAIPQNILSKAKVLWINYPNNPTGAVAGLSFFQEVANFAAKHNLAVCHDGPYSEIAFDGYKPVSFLEADGAKDVGIEFHSLSKSYNMTGWRIGMAVGNAKMIDALRRFKSNLDSGIPQAIQLMAIAALNGSQEIINQNCAIYQRRRDRLVESLRNIGMEVTAPKASLYIWAPVPESYTSASFATELLDKTGVVVTPGTGYGTAGEGYIRLSLTVPDEQIEKGIAKLAGYKKSS</sequence>
<protein>
    <recommendedName>
        <fullName evidence="1">LL-diaminopimelate aminotransferase</fullName>
        <shortName evidence="1">DAP-AT</shortName>
        <shortName evidence="1">DAP-aminotransferase</shortName>
        <shortName evidence="1">LL-DAP-aminotransferase</shortName>
        <ecNumber evidence="1">2.6.1.83</ecNumber>
    </recommendedName>
</protein>
<feature type="chain" id="PRO_0000342230" description="LL-diaminopimelate aminotransferase">
    <location>
        <begin position="1"/>
        <end position="388"/>
    </location>
</feature>
<feature type="binding site" evidence="1">
    <location>
        <position position="13"/>
    </location>
    <ligand>
        <name>substrate</name>
    </ligand>
</feature>
<feature type="binding site" evidence="1">
    <location>
        <position position="38"/>
    </location>
    <ligand>
        <name>substrate</name>
    </ligand>
</feature>
<feature type="binding site" evidence="1">
    <location>
        <begin position="101"/>
        <end position="102"/>
    </location>
    <ligand>
        <name>pyridoxal 5'-phosphate</name>
        <dbReference type="ChEBI" id="CHEBI:597326"/>
    </ligand>
</feature>
<feature type="binding site" evidence="1">
    <location>
        <position position="102"/>
    </location>
    <ligand>
        <name>substrate</name>
    </ligand>
</feature>
<feature type="binding site" evidence="1">
    <location>
        <position position="126"/>
    </location>
    <ligand>
        <name>pyridoxal 5'-phosphate</name>
        <dbReference type="ChEBI" id="CHEBI:597326"/>
    </ligand>
</feature>
<feature type="binding site" evidence="1">
    <location>
        <position position="126"/>
    </location>
    <ligand>
        <name>substrate</name>
    </ligand>
</feature>
<feature type="binding site" evidence="1">
    <location>
        <position position="176"/>
    </location>
    <ligand>
        <name>pyridoxal 5'-phosphate</name>
        <dbReference type="ChEBI" id="CHEBI:597326"/>
    </ligand>
</feature>
<feature type="binding site" evidence="1">
    <location>
        <position position="176"/>
    </location>
    <ligand>
        <name>substrate</name>
    </ligand>
</feature>
<feature type="binding site" evidence="1">
    <location>
        <position position="207"/>
    </location>
    <ligand>
        <name>pyridoxal 5'-phosphate</name>
        <dbReference type="ChEBI" id="CHEBI:597326"/>
    </ligand>
</feature>
<feature type="binding site" evidence="1">
    <location>
        <begin position="235"/>
        <end position="237"/>
    </location>
    <ligand>
        <name>pyridoxal 5'-phosphate</name>
        <dbReference type="ChEBI" id="CHEBI:597326"/>
    </ligand>
</feature>
<feature type="binding site" evidence="1">
    <location>
        <position position="246"/>
    </location>
    <ligand>
        <name>pyridoxal 5'-phosphate</name>
        <dbReference type="ChEBI" id="CHEBI:597326"/>
    </ligand>
</feature>
<feature type="binding site" evidence="1">
    <location>
        <position position="364"/>
    </location>
    <ligand>
        <name>substrate</name>
    </ligand>
</feature>
<feature type="modified residue" description="N6-(pyridoxal phosphate)lysine" evidence="1">
    <location>
        <position position="238"/>
    </location>
</feature>
<keyword id="KW-0032">Aminotransferase</keyword>
<keyword id="KW-0663">Pyridoxal phosphate</keyword>
<keyword id="KW-0808">Transferase</keyword>
<reference key="1">
    <citation type="journal article" date="2005" name="Nat. Biotechnol.">
        <title>Genome sequence of the chlorinated compound-respiring bacterium Dehalococcoides species strain CBDB1.</title>
        <authorList>
            <person name="Kube M."/>
            <person name="Beck A."/>
            <person name="Zinder S.H."/>
            <person name="Kuhl H."/>
            <person name="Reinhardt R."/>
            <person name="Adrian L."/>
        </authorList>
    </citation>
    <scope>NUCLEOTIDE SEQUENCE [LARGE SCALE GENOMIC DNA]</scope>
    <source>
        <strain>CBDB1</strain>
    </source>
</reference>
<organism>
    <name type="scientific">Dehalococcoides mccartyi (strain CBDB1)</name>
    <dbReference type="NCBI Taxonomy" id="255470"/>
    <lineage>
        <taxon>Bacteria</taxon>
        <taxon>Bacillati</taxon>
        <taxon>Chloroflexota</taxon>
        <taxon>Dehalococcoidia</taxon>
        <taxon>Dehalococcoidales</taxon>
        <taxon>Dehalococcoidaceae</taxon>
        <taxon>Dehalococcoides</taxon>
    </lineage>
</organism>
<proteinExistence type="inferred from homology"/>